<gene>
    <name evidence="1" type="primary">era</name>
    <name type="ordered locus">XCC1274</name>
</gene>
<sequence>MSETSPHRSGSVAVIGRPNVGKSTLTNALVGAKVSIVSNRPQTTRHRLLGIATFPEGQLMLVDTPGLHREQKRAMNRVMNRAARGSLEGVDAAVLVIEAGRWDEEDTLAFRVLSDADVPVVLVVNKVDRLKDKTALFPFLAQVSEGRTFAAVHPVSALKRKGLEALVSDLLKLVPEAEAMYGEDEITDRSQRFLAGELVREQLMRQLGEELPYATTVEIERFAEDGALLRIGAVIWVEREGQKAIVIGKGGTRLKDIGGKARLQMERLFGAKVFLETWVRVREGWSDDEAALKAFGYD</sequence>
<organism>
    <name type="scientific">Xanthomonas campestris pv. campestris (strain ATCC 33913 / DSM 3586 / NCPPB 528 / LMG 568 / P 25)</name>
    <dbReference type="NCBI Taxonomy" id="190485"/>
    <lineage>
        <taxon>Bacteria</taxon>
        <taxon>Pseudomonadati</taxon>
        <taxon>Pseudomonadota</taxon>
        <taxon>Gammaproteobacteria</taxon>
        <taxon>Lysobacterales</taxon>
        <taxon>Lysobacteraceae</taxon>
        <taxon>Xanthomonas</taxon>
    </lineage>
</organism>
<accession>Q8PB51</accession>
<comment type="function">
    <text evidence="1">An essential GTPase that binds both GDP and GTP, with rapid nucleotide exchange. Plays a role in 16S rRNA processing and 30S ribosomal subunit biogenesis and possibly also in cell cycle regulation and energy metabolism.</text>
</comment>
<comment type="subunit">
    <text evidence="1">Monomer.</text>
</comment>
<comment type="subcellular location">
    <subcellularLocation>
        <location>Cytoplasm</location>
    </subcellularLocation>
    <subcellularLocation>
        <location evidence="1">Cell inner membrane</location>
        <topology evidence="1">Peripheral membrane protein</topology>
    </subcellularLocation>
</comment>
<comment type="similarity">
    <text evidence="1 2">Belongs to the TRAFAC class TrmE-Era-EngA-EngB-Septin-like GTPase superfamily. Era GTPase family.</text>
</comment>
<evidence type="ECO:0000255" key="1">
    <source>
        <dbReference type="HAMAP-Rule" id="MF_00367"/>
    </source>
</evidence>
<evidence type="ECO:0000255" key="2">
    <source>
        <dbReference type="PROSITE-ProRule" id="PRU01050"/>
    </source>
</evidence>
<keyword id="KW-0997">Cell inner membrane</keyword>
<keyword id="KW-1003">Cell membrane</keyword>
<keyword id="KW-0963">Cytoplasm</keyword>
<keyword id="KW-0342">GTP-binding</keyword>
<keyword id="KW-0472">Membrane</keyword>
<keyword id="KW-0547">Nucleotide-binding</keyword>
<keyword id="KW-1185">Reference proteome</keyword>
<keyword id="KW-0690">Ribosome biogenesis</keyword>
<keyword id="KW-0694">RNA-binding</keyword>
<keyword id="KW-0699">rRNA-binding</keyword>
<name>ERA_XANCP</name>
<proteinExistence type="inferred from homology"/>
<reference key="1">
    <citation type="journal article" date="2002" name="Nature">
        <title>Comparison of the genomes of two Xanthomonas pathogens with differing host specificities.</title>
        <authorList>
            <person name="da Silva A.C.R."/>
            <person name="Ferro J.A."/>
            <person name="Reinach F.C."/>
            <person name="Farah C.S."/>
            <person name="Furlan L.R."/>
            <person name="Quaggio R.B."/>
            <person name="Monteiro-Vitorello C.B."/>
            <person name="Van Sluys M.A."/>
            <person name="Almeida N.F. Jr."/>
            <person name="Alves L.M.C."/>
            <person name="do Amaral A.M."/>
            <person name="Bertolini M.C."/>
            <person name="Camargo L.E.A."/>
            <person name="Camarotte G."/>
            <person name="Cannavan F."/>
            <person name="Cardozo J."/>
            <person name="Chambergo F."/>
            <person name="Ciapina L.P."/>
            <person name="Cicarelli R.M.B."/>
            <person name="Coutinho L.L."/>
            <person name="Cursino-Santos J.R."/>
            <person name="El-Dorry H."/>
            <person name="Faria J.B."/>
            <person name="Ferreira A.J.S."/>
            <person name="Ferreira R.C.C."/>
            <person name="Ferro M.I.T."/>
            <person name="Formighieri E.F."/>
            <person name="Franco M.C."/>
            <person name="Greggio C.C."/>
            <person name="Gruber A."/>
            <person name="Katsuyama A.M."/>
            <person name="Kishi L.T."/>
            <person name="Leite R.P."/>
            <person name="Lemos E.G.M."/>
            <person name="Lemos M.V.F."/>
            <person name="Locali E.C."/>
            <person name="Machado M.A."/>
            <person name="Madeira A.M.B.N."/>
            <person name="Martinez-Rossi N.M."/>
            <person name="Martins E.C."/>
            <person name="Meidanis J."/>
            <person name="Menck C.F.M."/>
            <person name="Miyaki C.Y."/>
            <person name="Moon D.H."/>
            <person name="Moreira L.M."/>
            <person name="Novo M.T.M."/>
            <person name="Okura V.K."/>
            <person name="Oliveira M.C."/>
            <person name="Oliveira V.R."/>
            <person name="Pereira H.A."/>
            <person name="Rossi A."/>
            <person name="Sena J.A.D."/>
            <person name="Silva C."/>
            <person name="de Souza R.F."/>
            <person name="Spinola L.A.F."/>
            <person name="Takita M.A."/>
            <person name="Tamura R.E."/>
            <person name="Teixeira E.C."/>
            <person name="Tezza R.I.D."/>
            <person name="Trindade dos Santos M."/>
            <person name="Truffi D."/>
            <person name="Tsai S.M."/>
            <person name="White F.F."/>
            <person name="Setubal J.C."/>
            <person name="Kitajima J.P."/>
        </authorList>
    </citation>
    <scope>NUCLEOTIDE SEQUENCE [LARGE SCALE GENOMIC DNA]</scope>
    <source>
        <strain>ATCC 33913 / DSM 3586 / NCPPB 528 / LMG 568 / P 25</strain>
    </source>
</reference>
<dbReference type="EMBL" id="AE008922">
    <property type="protein sequence ID" value="AAM40572.1"/>
    <property type="molecule type" value="Genomic_DNA"/>
</dbReference>
<dbReference type="RefSeq" id="NP_636648.1">
    <property type="nucleotide sequence ID" value="NC_003902.1"/>
</dbReference>
<dbReference type="RefSeq" id="WP_011036468.1">
    <property type="nucleotide sequence ID" value="NC_003902.1"/>
</dbReference>
<dbReference type="SMR" id="Q8PB51"/>
<dbReference type="STRING" id="190485.XCC1274"/>
<dbReference type="EnsemblBacteria" id="AAM40572">
    <property type="protein sequence ID" value="AAM40572"/>
    <property type="gene ID" value="XCC1274"/>
</dbReference>
<dbReference type="GeneID" id="58014134"/>
<dbReference type="KEGG" id="xcc:XCC1274"/>
<dbReference type="PATRIC" id="fig|190485.4.peg.1364"/>
<dbReference type="eggNOG" id="COG1159">
    <property type="taxonomic scope" value="Bacteria"/>
</dbReference>
<dbReference type="HOGENOM" id="CLU_038009_1_2_6"/>
<dbReference type="OrthoDB" id="9805918at2"/>
<dbReference type="Proteomes" id="UP000001010">
    <property type="component" value="Chromosome"/>
</dbReference>
<dbReference type="GO" id="GO:0005829">
    <property type="term" value="C:cytosol"/>
    <property type="evidence" value="ECO:0000318"/>
    <property type="project" value="GO_Central"/>
</dbReference>
<dbReference type="GO" id="GO:0005886">
    <property type="term" value="C:plasma membrane"/>
    <property type="evidence" value="ECO:0007669"/>
    <property type="project" value="UniProtKB-SubCell"/>
</dbReference>
<dbReference type="GO" id="GO:0005525">
    <property type="term" value="F:GTP binding"/>
    <property type="evidence" value="ECO:0007669"/>
    <property type="project" value="UniProtKB-UniRule"/>
</dbReference>
<dbReference type="GO" id="GO:0003924">
    <property type="term" value="F:GTPase activity"/>
    <property type="evidence" value="ECO:0007669"/>
    <property type="project" value="UniProtKB-UniRule"/>
</dbReference>
<dbReference type="GO" id="GO:0043024">
    <property type="term" value="F:ribosomal small subunit binding"/>
    <property type="evidence" value="ECO:0000318"/>
    <property type="project" value="GO_Central"/>
</dbReference>
<dbReference type="GO" id="GO:0019843">
    <property type="term" value="F:rRNA binding"/>
    <property type="evidence" value="ECO:0000318"/>
    <property type="project" value="GO_Central"/>
</dbReference>
<dbReference type="GO" id="GO:0070181">
    <property type="term" value="F:small ribosomal subunit rRNA binding"/>
    <property type="evidence" value="ECO:0007669"/>
    <property type="project" value="UniProtKB-UniRule"/>
</dbReference>
<dbReference type="GO" id="GO:0000028">
    <property type="term" value="P:ribosomal small subunit assembly"/>
    <property type="evidence" value="ECO:0000318"/>
    <property type="project" value="GO_Central"/>
</dbReference>
<dbReference type="CDD" id="cd04163">
    <property type="entry name" value="Era"/>
    <property type="match status" value="1"/>
</dbReference>
<dbReference type="CDD" id="cd22534">
    <property type="entry name" value="KH-II_Era"/>
    <property type="match status" value="1"/>
</dbReference>
<dbReference type="FunFam" id="3.30.300.20:FF:000003">
    <property type="entry name" value="GTPase Era"/>
    <property type="match status" value="1"/>
</dbReference>
<dbReference type="FunFam" id="3.40.50.300:FF:001543">
    <property type="entry name" value="GTPase Era"/>
    <property type="match status" value="1"/>
</dbReference>
<dbReference type="Gene3D" id="3.30.300.20">
    <property type="match status" value="1"/>
</dbReference>
<dbReference type="Gene3D" id="3.40.50.300">
    <property type="entry name" value="P-loop containing nucleotide triphosphate hydrolases"/>
    <property type="match status" value="1"/>
</dbReference>
<dbReference type="HAMAP" id="MF_00367">
    <property type="entry name" value="GTPase_Era"/>
    <property type="match status" value="1"/>
</dbReference>
<dbReference type="InterPro" id="IPR030388">
    <property type="entry name" value="G_ERA_dom"/>
</dbReference>
<dbReference type="InterPro" id="IPR006073">
    <property type="entry name" value="GTP-bd"/>
</dbReference>
<dbReference type="InterPro" id="IPR005662">
    <property type="entry name" value="GTPase_Era-like"/>
</dbReference>
<dbReference type="InterPro" id="IPR015946">
    <property type="entry name" value="KH_dom-like_a/b"/>
</dbReference>
<dbReference type="InterPro" id="IPR004044">
    <property type="entry name" value="KH_dom_type_2"/>
</dbReference>
<dbReference type="InterPro" id="IPR009019">
    <property type="entry name" value="KH_sf_prok-type"/>
</dbReference>
<dbReference type="InterPro" id="IPR027417">
    <property type="entry name" value="P-loop_NTPase"/>
</dbReference>
<dbReference type="InterPro" id="IPR005225">
    <property type="entry name" value="Small_GTP-bd"/>
</dbReference>
<dbReference type="NCBIfam" id="TIGR00436">
    <property type="entry name" value="era"/>
    <property type="match status" value="1"/>
</dbReference>
<dbReference type="NCBIfam" id="NF000908">
    <property type="entry name" value="PRK00089.1"/>
    <property type="match status" value="1"/>
</dbReference>
<dbReference type="NCBIfam" id="TIGR00231">
    <property type="entry name" value="small_GTP"/>
    <property type="match status" value="1"/>
</dbReference>
<dbReference type="PANTHER" id="PTHR42698">
    <property type="entry name" value="GTPASE ERA"/>
    <property type="match status" value="1"/>
</dbReference>
<dbReference type="PANTHER" id="PTHR42698:SF1">
    <property type="entry name" value="GTPASE ERA, MITOCHONDRIAL"/>
    <property type="match status" value="1"/>
</dbReference>
<dbReference type="Pfam" id="PF07650">
    <property type="entry name" value="KH_2"/>
    <property type="match status" value="1"/>
</dbReference>
<dbReference type="Pfam" id="PF01926">
    <property type="entry name" value="MMR_HSR1"/>
    <property type="match status" value="1"/>
</dbReference>
<dbReference type="PRINTS" id="PR00326">
    <property type="entry name" value="GTP1OBG"/>
</dbReference>
<dbReference type="SUPFAM" id="SSF52540">
    <property type="entry name" value="P-loop containing nucleoside triphosphate hydrolases"/>
    <property type="match status" value="1"/>
</dbReference>
<dbReference type="SUPFAM" id="SSF54814">
    <property type="entry name" value="Prokaryotic type KH domain (KH-domain type II)"/>
    <property type="match status" value="1"/>
</dbReference>
<dbReference type="PROSITE" id="PS51713">
    <property type="entry name" value="G_ERA"/>
    <property type="match status" value="1"/>
</dbReference>
<dbReference type="PROSITE" id="PS50823">
    <property type="entry name" value="KH_TYPE_2"/>
    <property type="match status" value="1"/>
</dbReference>
<feature type="chain" id="PRO_0000180075" description="GTPase Era">
    <location>
        <begin position="1"/>
        <end position="298"/>
    </location>
</feature>
<feature type="domain" description="Era-type G" evidence="2">
    <location>
        <begin position="8"/>
        <end position="176"/>
    </location>
</feature>
<feature type="domain" description="KH type-2" evidence="1">
    <location>
        <begin position="199"/>
        <end position="283"/>
    </location>
</feature>
<feature type="region of interest" description="G1" evidence="2">
    <location>
        <begin position="16"/>
        <end position="23"/>
    </location>
</feature>
<feature type="region of interest" description="G2" evidence="2">
    <location>
        <begin position="42"/>
        <end position="46"/>
    </location>
</feature>
<feature type="region of interest" description="G3" evidence="2">
    <location>
        <begin position="63"/>
        <end position="66"/>
    </location>
</feature>
<feature type="region of interest" description="G4" evidence="2">
    <location>
        <begin position="125"/>
        <end position="128"/>
    </location>
</feature>
<feature type="region of interest" description="G5" evidence="2">
    <location>
        <begin position="155"/>
        <end position="157"/>
    </location>
</feature>
<feature type="binding site" evidence="1">
    <location>
        <begin position="16"/>
        <end position="23"/>
    </location>
    <ligand>
        <name>GTP</name>
        <dbReference type="ChEBI" id="CHEBI:37565"/>
    </ligand>
</feature>
<feature type="binding site" evidence="1">
    <location>
        <begin position="63"/>
        <end position="67"/>
    </location>
    <ligand>
        <name>GTP</name>
        <dbReference type="ChEBI" id="CHEBI:37565"/>
    </ligand>
</feature>
<feature type="binding site" evidence="1">
    <location>
        <begin position="125"/>
        <end position="128"/>
    </location>
    <ligand>
        <name>GTP</name>
        <dbReference type="ChEBI" id="CHEBI:37565"/>
    </ligand>
</feature>
<protein>
    <recommendedName>
        <fullName evidence="1">GTPase Era</fullName>
    </recommendedName>
</protein>